<comment type="function">
    <text>Catalyzes the oxidation of uric acid to 5-hydroxyisourate, which is further processed to form (S)-allantoin.</text>
</comment>
<comment type="catalytic activity">
    <reaction>
        <text>urate + O2 + H2O = 5-hydroxyisourate + H2O2</text>
        <dbReference type="Rhea" id="RHEA:21368"/>
        <dbReference type="ChEBI" id="CHEBI:15377"/>
        <dbReference type="ChEBI" id="CHEBI:15379"/>
        <dbReference type="ChEBI" id="CHEBI:16240"/>
        <dbReference type="ChEBI" id="CHEBI:17775"/>
        <dbReference type="ChEBI" id="CHEBI:18072"/>
        <dbReference type="EC" id="1.7.3.3"/>
    </reaction>
</comment>
<comment type="pathway">
    <text>Purine metabolism; urate degradation; (S)-allantoin from urate: step 1/3.</text>
</comment>
<comment type="subcellular location">
    <subcellularLocation>
        <location>Peroxisome</location>
    </subcellularLocation>
</comment>
<comment type="similarity">
    <text evidence="5">Belongs to the uricase family.</text>
</comment>
<gene>
    <name type="primary">UOX</name>
</gene>
<organism>
    <name type="scientific">Macaca mulatta</name>
    <name type="common">Rhesus macaque</name>
    <dbReference type="NCBI Taxonomy" id="9544"/>
    <lineage>
        <taxon>Eukaryota</taxon>
        <taxon>Metazoa</taxon>
        <taxon>Chordata</taxon>
        <taxon>Craniata</taxon>
        <taxon>Vertebrata</taxon>
        <taxon>Euteleostomi</taxon>
        <taxon>Mammalia</taxon>
        <taxon>Eutheria</taxon>
        <taxon>Euarchontoglires</taxon>
        <taxon>Primates</taxon>
        <taxon>Haplorrhini</taxon>
        <taxon>Catarrhini</taxon>
        <taxon>Cercopithecidae</taxon>
        <taxon>Cercopithecinae</taxon>
        <taxon>Macaca</taxon>
    </lineage>
</organism>
<reference key="1">
    <citation type="journal article" date="2002" name="Mol. Biol. Evol.">
        <title>Loss of urate oxidase activity in hominoids and its evolutionary implications.</title>
        <authorList>
            <person name="Oda M."/>
            <person name="Satta Y."/>
            <person name="Takenaka O."/>
            <person name="Takahata N."/>
        </authorList>
    </citation>
    <scope>NUCLEOTIDE SEQUENCE [GENOMIC DNA]</scope>
    <source>
        <tissue>Kidney</tissue>
    </source>
</reference>
<keyword id="KW-0007">Acetylation</keyword>
<keyword id="KW-0560">Oxidoreductase</keyword>
<keyword id="KW-0576">Peroxisome</keyword>
<keyword id="KW-0597">Phosphoprotein</keyword>
<keyword id="KW-0659">Purine metabolism</keyword>
<keyword id="KW-1185">Reference proteome</keyword>
<protein>
    <recommendedName>
        <fullName>Uricase</fullName>
        <ecNumber>1.7.3.3</ecNumber>
    </recommendedName>
    <alternativeName>
        <fullName>Urate oxidase</fullName>
    </alternativeName>
</protein>
<dbReference type="EC" id="1.7.3.3"/>
<dbReference type="EMBL" id="AB074374">
    <property type="protein sequence ID" value="BAB91555.1"/>
    <property type="molecule type" value="Genomic_DNA"/>
</dbReference>
<dbReference type="SMR" id="Q8MKJ3"/>
<dbReference type="STRING" id="9544.ENSMMUP00000078793"/>
<dbReference type="PaxDb" id="9544-ENSMMUP00000000540"/>
<dbReference type="eggNOG" id="KOG1599">
    <property type="taxonomic scope" value="Eukaryota"/>
</dbReference>
<dbReference type="InParanoid" id="Q8MKJ3"/>
<dbReference type="UniPathway" id="UPA00394">
    <property type="reaction ID" value="UER00650"/>
</dbReference>
<dbReference type="Proteomes" id="UP000006718">
    <property type="component" value="Unassembled WGS sequence"/>
</dbReference>
<dbReference type="GO" id="GO:0005777">
    <property type="term" value="C:peroxisome"/>
    <property type="evidence" value="ECO:0000318"/>
    <property type="project" value="GO_Central"/>
</dbReference>
<dbReference type="GO" id="GO:0004846">
    <property type="term" value="F:urate oxidase activity"/>
    <property type="evidence" value="ECO:0000318"/>
    <property type="project" value="GO_Central"/>
</dbReference>
<dbReference type="GO" id="GO:0006145">
    <property type="term" value="P:purine nucleobase catabolic process"/>
    <property type="evidence" value="ECO:0000318"/>
    <property type="project" value="GO_Central"/>
</dbReference>
<dbReference type="GO" id="GO:0019628">
    <property type="term" value="P:urate catabolic process"/>
    <property type="evidence" value="ECO:0000318"/>
    <property type="project" value="GO_Central"/>
</dbReference>
<dbReference type="CDD" id="cd00445">
    <property type="entry name" value="Uricase"/>
    <property type="match status" value="1"/>
</dbReference>
<dbReference type="FunFam" id="3.10.270.10:FF:000001">
    <property type="entry name" value="Uricase"/>
    <property type="match status" value="1"/>
</dbReference>
<dbReference type="Gene3D" id="3.10.270.10">
    <property type="entry name" value="Urate Oxidase"/>
    <property type="match status" value="1"/>
</dbReference>
<dbReference type="InterPro" id="IPR002042">
    <property type="entry name" value="Uricase"/>
</dbReference>
<dbReference type="InterPro" id="IPR019842">
    <property type="entry name" value="Uricase_CS"/>
</dbReference>
<dbReference type="NCBIfam" id="TIGR03383">
    <property type="entry name" value="urate_oxi"/>
    <property type="match status" value="1"/>
</dbReference>
<dbReference type="PANTHER" id="PTHR42874">
    <property type="entry name" value="URICASE"/>
    <property type="match status" value="1"/>
</dbReference>
<dbReference type="PANTHER" id="PTHR42874:SF1">
    <property type="entry name" value="URICASE"/>
    <property type="match status" value="1"/>
</dbReference>
<dbReference type="Pfam" id="PF01014">
    <property type="entry name" value="Uricase"/>
    <property type="match status" value="2"/>
</dbReference>
<dbReference type="PIRSF" id="PIRSF000241">
    <property type="entry name" value="Urate_oxidase"/>
    <property type="match status" value="1"/>
</dbReference>
<dbReference type="PRINTS" id="PR00093">
    <property type="entry name" value="URICASE"/>
</dbReference>
<dbReference type="SUPFAM" id="SSF55620">
    <property type="entry name" value="Tetrahydrobiopterin biosynthesis enzymes-like"/>
    <property type="match status" value="2"/>
</dbReference>
<dbReference type="PROSITE" id="PS00366">
    <property type="entry name" value="URICASE"/>
    <property type="match status" value="1"/>
</dbReference>
<name>URIC_MACMU</name>
<accession>Q8MKJ3</accession>
<feature type="initiator methionine" description="Removed" evidence="2">
    <location>
        <position position="1"/>
    </location>
</feature>
<feature type="chain" id="PRO_0000165985" description="Uricase">
    <location>
        <begin position="2"/>
        <end position="304"/>
    </location>
</feature>
<feature type="short sequence motif" description="Microbody targeting signal" evidence="4">
    <location>
        <begin position="302"/>
        <end position="304"/>
    </location>
</feature>
<feature type="active site" description="Charge relay system" evidence="1">
    <location>
        <position position="23"/>
    </location>
</feature>
<feature type="active site" description="Charge relay system" evidence="1">
    <location>
        <position position="68"/>
    </location>
</feature>
<feature type="active site" description="Charge relay system" evidence="1">
    <location>
        <position position="264"/>
    </location>
</feature>
<feature type="binding site" evidence="3">
    <location>
        <position position="68"/>
    </location>
    <ligand>
        <name>urate</name>
        <dbReference type="ChEBI" id="CHEBI:17775"/>
    </ligand>
</feature>
<feature type="binding site" evidence="3">
    <location>
        <position position="69"/>
    </location>
    <ligand>
        <name>urate</name>
        <dbReference type="ChEBI" id="CHEBI:17775"/>
    </ligand>
</feature>
<feature type="binding site" evidence="3">
    <location>
        <position position="170"/>
    </location>
    <ligand>
        <name>urate</name>
        <dbReference type="ChEBI" id="CHEBI:17775"/>
    </ligand>
</feature>
<feature type="binding site" evidence="3">
    <location>
        <position position="187"/>
    </location>
    <ligand>
        <name>urate</name>
        <dbReference type="ChEBI" id="CHEBI:17775"/>
    </ligand>
</feature>
<feature type="binding site" evidence="3">
    <location>
        <position position="235"/>
    </location>
    <ligand>
        <name>urate</name>
        <dbReference type="ChEBI" id="CHEBI:17775"/>
    </ligand>
</feature>
<feature type="binding site" evidence="3">
    <location>
        <position position="236"/>
    </location>
    <ligand>
        <name>urate</name>
        <dbReference type="ChEBI" id="CHEBI:17775"/>
    </ligand>
</feature>
<feature type="binding site" evidence="3">
    <location>
        <position position="262"/>
    </location>
    <ligand>
        <name>urate</name>
        <dbReference type="ChEBI" id="CHEBI:17775"/>
    </ligand>
</feature>
<feature type="modified residue" description="N-acetylalanine" evidence="2">
    <location>
        <position position="2"/>
    </location>
</feature>
<feature type="modified residue" description="N6-acetyllysine; alternate" evidence="2">
    <location>
        <position position="10"/>
    </location>
</feature>
<feature type="modified residue" description="N6-succinyllysine; alternate" evidence="2">
    <location>
        <position position="10"/>
    </location>
</feature>
<feature type="modified residue" description="N6-acetyllysine; alternate" evidence="2">
    <location>
        <position position="23"/>
    </location>
</feature>
<feature type="modified residue" description="N6-succinyllysine; alternate" evidence="2">
    <location>
        <position position="23"/>
    </location>
</feature>
<feature type="modified residue" description="N6-acetyllysine" evidence="2">
    <location>
        <position position="27"/>
    </location>
</feature>
<feature type="modified residue" description="N6-acetyllysine" evidence="2">
    <location>
        <position position="36"/>
    </location>
</feature>
<feature type="modified residue" description="Phosphoserine" evidence="2">
    <location>
        <position position="39"/>
    </location>
</feature>
<feature type="modified residue" description="Phosphoserine" evidence="2">
    <location>
        <position position="63"/>
    </location>
</feature>
<feature type="modified residue" description="N6-acetyllysine" evidence="2">
    <location>
        <position position="118"/>
    </location>
</feature>
<feature type="modified residue" description="N6-acetyllysine" evidence="2">
    <location>
        <position position="122"/>
    </location>
</feature>
<feature type="modified residue" description="N6-acetyllysine" evidence="2">
    <location>
        <position position="164"/>
    </location>
</feature>
<feature type="modified residue" description="N6-acetyllysine" evidence="2">
    <location>
        <position position="175"/>
    </location>
</feature>
<feature type="modified residue" description="N6-acetyllysine" evidence="2">
    <location>
        <position position="185"/>
    </location>
</feature>
<feature type="modified residue" description="N6-acetyllysine; alternate" evidence="2">
    <location>
        <position position="221"/>
    </location>
</feature>
<feature type="modified residue" description="N6-succinyllysine; alternate" evidence="2">
    <location>
        <position position="221"/>
    </location>
</feature>
<feature type="modified residue" description="N6-acetyllysine; alternate" evidence="2">
    <location>
        <position position="228"/>
    </location>
</feature>
<feature type="modified residue" description="N6-succinyllysine; alternate" evidence="2">
    <location>
        <position position="228"/>
    </location>
</feature>
<feature type="modified residue" description="Phosphoserine" evidence="2">
    <location>
        <position position="232"/>
    </location>
</feature>
<feature type="modified residue" description="N6-acetyllysine" evidence="2">
    <location>
        <position position="278"/>
    </location>
</feature>
<feature type="modified residue" description="Phosphotyrosine" evidence="2">
    <location>
        <position position="289"/>
    </location>
</feature>
<evidence type="ECO:0000250" key="1">
    <source>
        <dbReference type="UniProtKB" id="D0VWQ1"/>
    </source>
</evidence>
<evidence type="ECO:0000250" key="2">
    <source>
        <dbReference type="UniProtKB" id="P25688"/>
    </source>
</evidence>
<evidence type="ECO:0000250" key="3">
    <source>
        <dbReference type="UniProtKB" id="Q00511"/>
    </source>
</evidence>
<evidence type="ECO:0000255" key="4"/>
<evidence type="ECO:0000305" key="5"/>
<sequence length="304" mass="34966">MADYHNNYKKNDELEFVRTGYGKDMVKVLHIQRDGKYHSIKEVATSVQLTLSSKKDYLHGDNSDIIPTDTIKNTVHVLAKFKGIKSIEAFGVNICEYFLSSFNHVIRAQVYVEEIPWKRLEKNGVKHVHAFIHTPTGTHFCEVEQLRSGPPVIHSGTKDLKVLKTTQSGFEGFIKDQFTTLPEVKDRCFATQVYCKWRYHQCRDVDFEATWGTIRDLVLEKFAGPYDKGEYSPSVQKTLYDIQVLSLSRVPEIEDMEISLPNIHYFNIDMSKMGLINKEEVLLPLDNPYGKITGTVKRKLSSRL</sequence>
<proteinExistence type="inferred from homology"/>